<feature type="chain" id="PRO_1000099546" description="UvrABC system protein B">
    <location>
        <begin position="1"/>
        <end position="672"/>
    </location>
</feature>
<feature type="domain" description="Helicase ATP-binding" evidence="1">
    <location>
        <begin position="26"/>
        <end position="181"/>
    </location>
</feature>
<feature type="domain" description="Helicase C-terminal" evidence="1">
    <location>
        <begin position="430"/>
        <end position="592"/>
    </location>
</feature>
<feature type="domain" description="UVR" evidence="1">
    <location>
        <begin position="631"/>
        <end position="666"/>
    </location>
</feature>
<feature type="short sequence motif" description="Beta-hairpin">
    <location>
        <begin position="92"/>
        <end position="115"/>
    </location>
</feature>
<feature type="binding site" evidence="1">
    <location>
        <begin position="39"/>
        <end position="46"/>
    </location>
    <ligand>
        <name>ATP</name>
        <dbReference type="ChEBI" id="CHEBI:30616"/>
    </ligand>
</feature>
<name>UVRB_COXB1</name>
<reference key="1">
    <citation type="journal article" date="2009" name="Infect. Immun.">
        <title>Comparative genomics reveal extensive transposon-mediated genomic plasticity and diversity among potential effector proteins within the genus Coxiella.</title>
        <authorList>
            <person name="Beare P.A."/>
            <person name="Unsworth N."/>
            <person name="Andoh M."/>
            <person name="Voth D.E."/>
            <person name="Omsland A."/>
            <person name="Gilk S.D."/>
            <person name="Williams K.P."/>
            <person name="Sobral B.W."/>
            <person name="Kupko J.J. III"/>
            <person name="Porcella S.F."/>
            <person name="Samuel J.E."/>
            <person name="Heinzen R.A."/>
        </authorList>
    </citation>
    <scope>NUCLEOTIDE SEQUENCE [LARGE SCALE GENOMIC DNA]</scope>
    <source>
        <strain>CbuK_Q154</strain>
    </source>
</reference>
<proteinExistence type="inferred from homology"/>
<evidence type="ECO:0000255" key="1">
    <source>
        <dbReference type="HAMAP-Rule" id="MF_00204"/>
    </source>
</evidence>
<accession>B6J8A0</accession>
<gene>
    <name evidence="1" type="primary">uvrB</name>
    <name type="ordered locus">CbuK_1320</name>
</gene>
<organism>
    <name type="scientific">Coxiella burnetii (strain CbuK_Q154)</name>
    <name type="common">Coxiella burnetii (strain Q154)</name>
    <dbReference type="NCBI Taxonomy" id="434924"/>
    <lineage>
        <taxon>Bacteria</taxon>
        <taxon>Pseudomonadati</taxon>
        <taxon>Pseudomonadota</taxon>
        <taxon>Gammaproteobacteria</taxon>
        <taxon>Legionellales</taxon>
        <taxon>Coxiellaceae</taxon>
        <taxon>Coxiella</taxon>
    </lineage>
</organism>
<keyword id="KW-0067">ATP-binding</keyword>
<keyword id="KW-0963">Cytoplasm</keyword>
<keyword id="KW-0227">DNA damage</keyword>
<keyword id="KW-0228">DNA excision</keyword>
<keyword id="KW-0234">DNA repair</keyword>
<keyword id="KW-0267">Excision nuclease</keyword>
<keyword id="KW-0347">Helicase</keyword>
<keyword id="KW-0378">Hydrolase</keyword>
<keyword id="KW-0547">Nucleotide-binding</keyword>
<keyword id="KW-0742">SOS response</keyword>
<comment type="function">
    <text evidence="1">The UvrABC repair system catalyzes the recognition and processing of DNA lesions. A damage recognition complex composed of 2 UvrA and 2 UvrB subunits scans DNA for abnormalities. Upon binding of the UvrA(2)B(2) complex to a putative damaged site, the DNA wraps around one UvrB monomer. DNA wrap is dependent on ATP binding by UvrB and probably causes local melting of the DNA helix, facilitating insertion of UvrB beta-hairpin between the DNA strands. Then UvrB probes one DNA strand for the presence of a lesion. If a lesion is found the UvrA subunits dissociate and the UvrB-DNA preincision complex is formed. This complex is subsequently bound by UvrC and the second UvrB is released. If no lesion is found, the DNA wraps around the other UvrB subunit that will check the other stand for damage.</text>
</comment>
<comment type="subunit">
    <text evidence="1">Forms a heterotetramer with UvrA during the search for lesions. Interacts with UvrC in an incision complex.</text>
</comment>
<comment type="subcellular location">
    <subcellularLocation>
        <location evidence="1">Cytoplasm</location>
    </subcellularLocation>
</comment>
<comment type="domain">
    <text evidence="1">The beta-hairpin motif is involved in DNA binding.</text>
</comment>
<comment type="similarity">
    <text evidence="1">Belongs to the UvrB family.</text>
</comment>
<dbReference type="EMBL" id="CP001020">
    <property type="protein sequence ID" value="ACJ20500.1"/>
    <property type="molecule type" value="Genomic_DNA"/>
</dbReference>
<dbReference type="RefSeq" id="WP_005771188.1">
    <property type="nucleotide sequence ID" value="NC_011528.1"/>
</dbReference>
<dbReference type="SMR" id="B6J8A0"/>
<dbReference type="KEGG" id="cbc:CbuK_1320"/>
<dbReference type="HOGENOM" id="CLU_009621_2_1_6"/>
<dbReference type="GO" id="GO:0005737">
    <property type="term" value="C:cytoplasm"/>
    <property type="evidence" value="ECO:0007669"/>
    <property type="project" value="UniProtKB-SubCell"/>
</dbReference>
<dbReference type="GO" id="GO:0009380">
    <property type="term" value="C:excinuclease repair complex"/>
    <property type="evidence" value="ECO:0007669"/>
    <property type="project" value="InterPro"/>
</dbReference>
<dbReference type="GO" id="GO:0005524">
    <property type="term" value="F:ATP binding"/>
    <property type="evidence" value="ECO:0007669"/>
    <property type="project" value="UniProtKB-UniRule"/>
</dbReference>
<dbReference type="GO" id="GO:0016887">
    <property type="term" value="F:ATP hydrolysis activity"/>
    <property type="evidence" value="ECO:0007669"/>
    <property type="project" value="InterPro"/>
</dbReference>
<dbReference type="GO" id="GO:0003677">
    <property type="term" value="F:DNA binding"/>
    <property type="evidence" value="ECO:0007669"/>
    <property type="project" value="UniProtKB-UniRule"/>
</dbReference>
<dbReference type="GO" id="GO:0009381">
    <property type="term" value="F:excinuclease ABC activity"/>
    <property type="evidence" value="ECO:0007669"/>
    <property type="project" value="UniProtKB-UniRule"/>
</dbReference>
<dbReference type="GO" id="GO:0004386">
    <property type="term" value="F:helicase activity"/>
    <property type="evidence" value="ECO:0007669"/>
    <property type="project" value="UniProtKB-KW"/>
</dbReference>
<dbReference type="GO" id="GO:0006289">
    <property type="term" value="P:nucleotide-excision repair"/>
    <property type="evidence" value="ECO:0007669"/>
    <property type="project" value="UniProtKB-UniRule"/>
</dbReference>
<dbReference type="GO" id="GO:0009432">
    <property type="term" value="P:SOS response"/>
    <property type="evidence" value="ECO:0007669"/>
    <property type="project" value="UniProtKB-UniRule"/>
</dbReference>
<dbReference type="CDD" id="cd17916">
    <property type="entry name" value="DEXHc_UvrB"/>
    <property type="match status" value="1"/>
</dbReference>
<dbReference type="CDD" id="cd18790">
    <property type="entry name" value="SF2_C_UvrB"/>
    <property type="match status" value="1"/>
</dbReference>
<dbReference type="FunFam" id="3.40.50.300:FF:000477">
    <property type="entry name" value="UvrABC system protein B"/>
    <property type="match status" value="1"/>
</dbReference>
<dbReference type="Gene3D" id="6.10.140.240">
    <property type="match status" value="1"/>
</dbReference>
<dbReference type="Gene3D" id="3.40.50.300">
    <property type="entry name" value="P-loop containing nucleotide triphosphate hydrolases"/>
    <property type="match status" value="3"/>
</dbReference>
<dbReference type="Gene3D" id="4.10.860.10">
    <property type="entry name" value="UVR domain"/>
    <property type="match status" value="1"/>
</dbReference>
<dbReference type="HAMAP" id="MF_00204">
    <property type="entry name" value="UvrB"/>
    <property type="match status" value="1"/>
</dbReference>
<dbReference type="InterPro" id="IPR006935">
    <property type="entry name" value="Helicase/UvrB_N"/>
</dbReference>
<dbReference type="InterPro" id="IPR014001">
    <property type="entry name" value="Helicase_ATP-bd"/>
</dbReference>
<dbReference type="InterPro" id="IPR001650">
    <property type="entry name" value="Helicase_C-like"/>
</dbReference>
<dbReference type="InterPro" id="IPR027417">
    <property type="entry name" value="P-loop_NTPase"/>
</dbReference>
<dbReference type="InterPro" id="IPR001943">
    <property type="entry name" value="UVR_dom"/>
</dbReference>
<dbReference type="InterPro" id="IPR036876">
    <property type="entry name" value="UVR_dom_sf"/>
</dbReference>
<dbReference type="InterPro" id="IPR004807">
    <property type="entry name" value="UvrB"/>
</dbReference>
<dbReference type="InterPro" id="IPR041471">
    <property type="entry name" value="UvrB_inter"/>
</dbReference>
<dbReference type="InterPro" id="IPR024759">
    <property type="entry name" value="UvrB_YAD/RRR_dom"/>
</dbReference>
<dbReference type="NCBIfam" id="NF003673">
    <property type="entry name" value="PRK05298.1"/>
    <property type="match status" value="1"/>
</dbReference>
<dbReference type="NCBIfam" id="TIGR00631">
    <property type="entry name" value="uvrb"/>
    <property type="match status" value="1"/>
</dbReference>
<dbReference type="PANTHER" id="PTHR24029">
    <property type="entry name" value="UVRABC SYSTEM PROTEIN B"/>
    <property type="match status" value="1"/>
</dbReference>
<dbReference type="PANTHER" id="PTHR24029:SF0">
    <property type="entry name" value="UVRABC SYSTEM PROTEIN B"/>
    <property type="match status" value="1"/>
</dbReference>
<dbReference type="Pfam" id="PF00271">
    <property type="entry name" value="Helicase_C"/>
    <property type="match status" value="1"/>
</dbReference>
<dbReference type="Pfam" id="PF04851">
    <property type="entry name" value="ResIII"/>
    <property type="match status" value="1"/>
</dbReference>
<dbReference type="Pfam" id="PF02151">
    <property type="entry name" value="UVR"/>
    <property type="match status" value="1"/>
</dbReference>
<dbReference type="Pfam" id="PF12344">
    <property type="entry name" value="UvrB"/>
    <property type="match status" value="1"/>
</dbReference>
<dbReference type="Pfam" id="PF17757">
    <property type="entry name" value="UvrB_inter"/>
    <property type="match status" value="1"/>
</dbReference>
<dbReference type="SMART" id="SM00487">
    <property type="entry name" value="DEXDc"/>
    <property type="match status" value="1"/>
</dbReference>
<dbReference type="SMART" id="SM00490">
    <property type="entry name" value="HELICc"/>
    <property type="match status" value="1"/>
</dbReference>
<dbReference type="SUPFAM" id="SSF46600">
    <property type="entry name" value="C-terminal UvrC-binding domain of UvrB"/>
    <property type="match status" value="1"/>
</dbReference>
<dbReference type="SUPFAM" id="SSF52540">
    <property type="entry name" value="P-loop containing nucleoside triphosphate hydrolases"/>
    <property type="match status" value="2"/>
</dbReference>
<dbReference type="PROSITE" id="PS51192">
    <property type="entry name" value="HELICASE_ATP_BIND_1"/>
    <property type="match status" value="1"/>
</dbReference>
<dbReference type="PROSITE" id="PS51194">
    <property type="entry name" value="HELICASE_CTER"/>
    <property type="match status" value="1"/>
</dbReference>
<dbReference type="PROSITE" id="PS50151">
    <property type="entry name" value="UVR"/>
    <property type="match status" value="1"/>
</dbReference>
<protein>
    <recommendedName>
        <fullName evidence="1">UvrABC system protein B</fullName>
        <shortName evidence="1">Protein UvrB</shortName>
    </recommendedName>
    <alternativeName>
        <fullName evidence="1">Excinuclease ABC subunit B</fullName>
    </alternativeName>
</protein>
<sequence>MSKAFKLTSKFKPSGDQPQAIEKLVAGLEDGLAYQTLLGVTGSGKTFTIANAIEKVQRPTLILEPNKTLAAQFYAEMREFFPENAVEYFVSYYDYYQPEAYVPSSDTYIEKDASINDHIEQMRLSATKAITERHDTIIIATVSAIYGLGDPDSYLKMLLHLTRGDQIDQRKILQRLAELQYTRNDLELRRATYRVNGDIIDIYPADSEREAVRVELFDDEVENLSYFDPLTGEMLRRVPRITVYPKTHYVTPREKLLSTLDQIKIELKERLSQLEKANKLVERQRLEQRTKFDMEMILELGYCSGIENYSRYLSGRNEGEPPPTLIDYLPKDALLIIDESHVTIPQLGGMYRGDRARKETLVEYGFRLPSALDNRPLRFDEFEKLAPQTIFISATPGPYEEKQSDQVVELLVRPTGLIDPEIEVRPVATQVDDLLSEIKKRAAQNERVLVTTLTKRMAEDLTEYFTEHNVRVRYLHSDIDTVERVEIIRDLRLGVFDMLVGINLLREGLDIPEVSLVAILDADKEGFLRSERSLIQTMGRAARNVHGKAILYADRITDSMKRAMEEAERRRIAQSAYNEKHHITPKSIQKAVTEIIEGARTYTERGRFVNQAQLIAEEEAKYIAMTPKQLAKELRKLEEQMYHHARNLEFEEAAAVRDKIQHIRKGLLEVKE</sequence>